<keyword id="KW-0067">ATP-binding</keyword>
<keyword id="KW-0143">Chaperone</keyword>
<keyword id="KW-0479">Metal-binding</keyword>
<keyword id="KW-0547">Nucleotide-binding</keyword>
<keyword id="KW-1185">Reference proteome</keyword>
<keyword id="KW-0862">Zinc</keyword>
<comment type="function">
    <text evidence="1">ATP-dependent specificity component of the Clp protease. It directs the protease to specific substrates. Can perform chaperone functions in the absence of ClpP.</text>
</comment>
<comment type="subunit">
    <text evidence="1">Component of the ClpX-ClpP complex. Forms a hexameric ring that, in the presence of ATP, binds to fourteen ClpP subunits assembled into a disk-like structure with a central cavity, resembling the structure of eukaryotic proteasomes.</text>
</comment>
<comment type="similarity">
    <text evidence="1">Belongs to the ClpX chaperone family.</text>
</comment>
<comment type="sequence caution" evidence="3">
    <conflict type="erroneous initiation">
        <sequence resource="EMBL-CDS" id="AAU27937"/>
    </conflict>
</comment>
<gene>
    <name evidence="1" type="primary">clpX</name>
    <name type="ordered locus">lpg1860</name>
</gene>
<proteinExistence type="inferred from homology"/>
<accession>Q5ZUE0</accession>
<reference key="1">
    <citation type="journal article" date="2004" name="Science">
        <title>The genomic sequence of the accidental pathogen Legionella pneumophila.</title>
        <authorList>
            <person name="Chien M."/>
            <person name="Morozova I."/>
            <person name="Shi S."/>
            <person name="Sheng H."/>
            <person name="Chen J."/>
            <person name="Gomez S.M."/>
            <person name="Asamani G."/>
            <person name="Hill K."/>
            <person name="Nuara J."/>
            <person name="Feder M."/>
            <person name="Rineer J."/>
            <person name="Greenberg J.J."/>
            <person name="Steshenko V."/>
            <person name="Park S.H."/>
            <person name="Zhao B."/>
            <person name="Teplitskaya E."/>
            <person name="Edwards J.R."/>
            <person name="Pampou S."/>
            <person name="Georghiou A."/>
            <person name="Chou I.-C."/>
            <person name="Iannuccilli W."/>
            <person name="Ulz M.E."/>
            <person name="Kim D.H."/>
            <person name="Geringer-Sameth A."/>
            <person name="Goldsberry C."/>
            <person name="Morozov P."/>
            <person name="Fischer S.G."/>
            <person name="Segal G."/>
            <person name="Qu X."/>
            <person name="Rzhetsky A."/>
            <person name="Zhang P."/>
            <person name="Cayanis E."/>
            <person name="De Jong P.J."/>
            <person name="Ju J."/>
            <person name="Kalachikov S."/>
            <person name="Shuman H.A."/>
            <person name="Russo J.J."/>
        </authorList>
    </citation>
    <scope>NUCLEOTIDE SEQUENCE [LARGE SCALE GENOMIC DNA]</scope>
    <source>
        <strain>Philadelphia 1 / ATCC 33152 / DSM 7513</strain>
    </source>
</reference>
<organism>
    <name type="scientific">Legionella pneumophila subsp. pneumophila (strain Philadelphia 1 / ATCC 33152 / DSM 7513)</name>
    <dbReference type="NCBI Taxonomy" id="272624"/>
    <lineage>
        <taxon>Bacteria</taxon>
        <taxon>Pseudomonadati</taxon>
        <taxon>Pseudomonadota</taxon>
        <taxon>Gammaproteobacteria</taxon>
        <taxon>Legionellales</taxon>
        <taxon>Legionellaceae</taxon>
        <taxon>Legionella</taxon>
    </lineage>
</organism>
<protein>
    <recommendedName>
        <fullName evidence="1">ATP-dependent Clp protease ATP-binding subunit ClpX</fullName>
    </recommendedName>
</protein>
<dbReference type="EMBL" id="AE017354">
    <property type="protein sequence ID" value="AAU27937.1"/>
    <property type="status" value="ALT_INIT"/>
    <property type="molecule type" value="Genomic_DNA"/>
</dbReference>
<dbReference type="RefSeq" id="WP_015444406.1">
    <property type="nucleotide sequence ID" value="NC_002942.5"/>
</dbReference>
<dbReference type="RefSeq" id="YP_095884.1">
    <property type="nucleotide sequence ID" value="NC_002942.5"/>
</dbReference>
<dbReference type="SMR" id="Q5ZUE0"/>
<dbReference type="STRING" id="272624.lpg1860"/>
<dbReference type="PaxDb" id="272624-lpg1860"/>
<dbReference type="GeneID" id="57035852"/>
<dbReference type="KEGG" id="lpn:lpg1860"/>
<dbReference type="PATRIC" id="fig|272624.6.peg.1949"/>
<dbReference type="eggNOG" id="COG1219">
    <property type="taxonomic scope" value="Bacteria"/>
</dbReference>
<dbReference type="HOGENOM" id="CLU_014218_8_2_6"/>
<dbReference type="OrthoDB" id="9804062at2"/>
<dbReference type="Proteomes" id="UP000000609">
    <property type="component" value="Chromosome"/>
</dbReference>
<dbReference type="GO" id="GO:0009376">
    <property type="term" value="C:HslUV protease complex"/>
    <property type="evidence" value="ECO:0007669"/>
    <property type="project" value="TreeGrafter"/>
</dbReference>
<dbReference type="GO" id="GO:0005524">
    <property type="term" value="F:ATP binding"/>
    <property type="evidence" value="ECO:0007669"/>
    <property type="project" value="UniProtKB-UniRule"/>
</dbReference>
<dbReference type="GO" id="GO:0016887">
    <property type="term" value="F:ATP hydrolysis activity"/>
    <property type="evidence" value="ECO:0007669"/>
    <property type="project" value="InterPro"/>
</dbReference>
<dbReference type="GO" id="GO:0140662">
    <property type="term" value="F:ATP-dependent protein folding chaperone"/>
    <property type="evidence" value="ECO:0007669"/>
    <property type="project" value="InterPro"/>
</dbReference>
<dbReference type="GO" id="GO:0046983">
    <property type="term" value="F:protein dimerization activity"/>
    <property type="evidence" value="ECO:0007669"/>
    <property type="project" value="InterPro"/>
</dbReference>
<dbReference type="GO" id="GO:0051082">
    <property type="term" value="F:unfolded protein binding"/>
    <property type="evidence" value="ECO:0007669"/>
    <property type="project" value="UniProtKB-UniRule"/>
</dbReference>
<dbReference type="GO" id="GO:0008270">
    <property type="term" value="F:zinc ion binding"/>
    <property type="evidence" value="ECO:0007669"/>
    <property type="project" value="InterPro"/>
</dbReference>
<dbReference type="GO" id="GO:0051301">
    <property type="term" value="P:cell division"/>
    <property type="evidence" value="ECO:0007669"/>
    <property type="project" value="TreeGrafter"/>
</dbReference>
<dbReference type="GO" id="GO:0051603">
    <property type="term" value="P:proteolysis involved in protein catabolic process"/>
    <property type="evidence" value="ECO:0007669"/>
    <property type="project" value="TreeGrafter"/>
</dbReference>
<dbReference type="CDD" id="cd19497">
    <property type="entry name" value="RecA-like_ClpX"/>
    <property type="match status" value="1"/>
</dbReference>
<dbReference type="FunFam" id="1.10.8.60:FF:000002">
    <property type="entry name" value="ATP-dependent Clp protease ATP-binding subunit ClpX"/>
    <property type="match status" value="1"/>
</dbReference>
<dbReference type="FunFam" id="3.40.50.300:FF:000005">
    <property type="entry name" value="ATP-dependent Clp protease ATP-binding subunit ClpX"/>
    <property type="match status" value="1"/>
</dbReference>
<dbReference type="Gene3D" id="1.10.8.60">
    <property type="match status" value="1"/>
</dbReference>
<dbReference type="Gene3D" id="6.20.220.10">
    <property type="entry name" value="ClpX chaperone, C4-type zinc finger domain"/>
    <property type="match status" value="1"/>
</dbReference>
<dbReference type="Gene3D" id="3.40.50.300">
    <property type="entry name" value="P-loop containing nucleotide triphosphate hydrolases"/>
    <property type="match status" value="1"/>
</dbReference>
<dbReference type="HAMAP" id="MF_00175">
    <property type="entry name" value="ClpX"/>
    <property type="match status" value="1"/>
</dbReference>
<dbReference type="InterPro" id="IPR003593">
    <property type="entry name" value="AAA+_ATPase"/>
</dbReference>
<dbReference type="InterPro" id="IPR050052">
    <property type="entry name" value="ATP-dep_Clp_protease_ClpX"/>
</dbReference>
<dbReference type="InterPro" id="IPR003959">
    <property type="entry name" value="ATPase_AAA_core"/>
</dbReference>
<dbReference type="InterPro" id="IPR019489">
    <property type="entry name" value="Clp_ATPase_C"/>
</dbReference>
<dbReference type="InterPro" id="IPR004487">
    <property type="entry name" value="Clp_protease_ATP-bd_su_ClpX"/>
</dbReference>
<dbReference type="InterPro" id="IPR046425">
    <property type="entry name" value="ClpX_bact"/>
</dbReference>
<dbReference type="InterPro" id="IPR027417">
    <property type="entry name" value="P-loop_NTPase"/>
</dbReference>
<dbReference type="InterPro" id="IPR010603">
    <property type="entry name" value="Znf_CppX_C4"/>
</dbReference>
<dbReference type="InterPro" id="IPR038366">
    <property type="entry name" value="Znf_CppX_C4_sf"/>
</dbReference>
<dbReference type="NCBIfam" id="TIGR00382">
    <property type="entry name" value="clpX"/>
    <property type="match status" value="1"/>
</dbReference>
<dbReference type="NCBIfam" id="NF003745">
    <property type="entry name" value="PRK05342.1"/>
    <property type="match status" value="1"/>
</dbReference>
<dbReference type="PANTHER" id="PTHR48102:SF7">
    <property type="entry name" value="ATP-DEPENDENT CLP PROTEASE ATP-BINDING SUBUNIT CLPX-LIKE, MITOCHONDRIAL"/>
    <property type="match status" value="1"/>
</dbReference>
<dbReference type="PANTHER" id="PTHR48102">
    <property type="entry name" value="ATP-DEPENDENT CLP PROTEASE ATP-BINDING SUBUNIT CLPX-LIKE, MITOCHONDRIAL-RELATED"/>
    <property type="match status" value="1"/>
</dbReference>
<dbReference type="Pfam" id="PF07724">
    <property type="entry name" value="AAA_2"/>
    <property type="match status" value="1"/>
</dbReference>
<dbReference type="Pfam" id="PF10431">
    <property type="entry name" value="ClpB_D2-small"/>
    <property type="match status" value="1"/>
</dbReference>
<dbReference type="Pfam" id="PF06689">
    <property type="entry name" value="zf-C4_ClpX"/>
    <property type="match status" value="1"/>
</dbReference>
<dbReference type="SMART" id="SM00382">
    <property type="entry name" value="AAA"/>
    <property type="match status" value="1"/>
</dbReference>
<dbReference type="SMART" id="SM01086">
    <property type="entry name" value="ClpB_D2-small"/>
    <property type="match status" value="1"/>
</dbReference>
<dbReference type="SMART" id="SM00994">
    <property type="entry name" value="zf-C4_ClpX"/>
    <property type="match status" value="1"/>
</dbReference>
<dbReference type="SUPFAM" id="SSF57716">
    <property type="entry name" value="Glucocorticoid receptor-like (DNA-binding domain)"/>
    <property type="match status" value="1"/>
</dbReference>
<dbReference type="SUPFAM" id="SSF52540">
    <property type="entry name" value="P-loop containing nucleoside triphosphate hydrolases"/>
    <property type="match status" value="1"/>
</dbReference>
<dbReference type="PROSITE" id="PS51902">
    <property type="entry name" value="CLPX_ZB"/>
    <property type="match status" value="1"/>
</dbReference>
<feature type="chain" id="PRO_0000160373" description="ATP-dependent Clp protease ATP-binding subunit ClpX">
    <location>
        <begin position="1"/>
        <end position="424"/>
    </location>
</feature>
<feature type="domain" description="ClpX-type ZB" evidence="2">
    <location>
        <begin position="1"/>
        <end position="56"/>
    </location>
</feature>
<feature type="binding site" evidence="2">
    <location>
        <position position="15"/>
    </location>
    <ligand>
        <name>Zn(2+)</name>
        <dbReference type="ChEBI" id="CHEBI:29105"/>
    </ligand>
</feature>
<feature type="binding site" evidence="2">
    <location>
        <position position="18"/>
    </location>
    <ligand>
        <name>Zn(2+)</name>
        <dbReference type="ChEBI" id="CHEBI:29105"/>
    </ligand>
</feature>
<feature type="binding site" evidence="2">
    <location>
        <position position="37"/>
    </location>
    <ligand>
        <name>Zn(2+)</name>
        <dbReference type="ChEBI" id="CHEBI:29105"/>
    </ligand>
</feature>
<feature type="binding site" evidence="2">
    <location>
        <position position="40"/>
    </location>
    <ligand>
        <name>Zn(2+)</name>
        <dbReference type="ChEBI" id="CHEBI:29105"/>
    </ligand>
</feature>
<feature type="binding site" evidence="1">
    <location>
        <begin position="118"/>
        <end position="125"/>
    </location>
    <ligand>
        <name>ATP</name>
        <dbReference type="ChEBI" id="CHEBI:30616"/>
    </ligand>
</feature>
<name>CLPX_LEGPH</name>
<sequence>MSKSGNGNGDKVLYCSFCGKSQHEVKKLIAGPSVFVCDECVELCNDIIREETHETHEETEARLPTPKEISNFLDEYVIGQQHAKKVLSVAVYNHYKRLQHKSEDGVELGKSNILLIGPTGSGKTLLAQTLARILNVPFAMADATTLTEAGYVGEDVENIIQKLLQKCDYDVDKAQQGIVYIDEIDKISRKSDNPSITRDVSGEGVQQALLKLIEGTVASVPPQGGRKHPQQEFLQVDTSNILFICGGAFAGLDKVIRERSDKSSIGFSAQLKSKKSSNDEVSKVLGQLESDDLIKYGLIPEFVGRLPVVTTLQELDEAALIDILTRPKNALTKQFQSLFKMEGSELEFRGEALIAIAKKALERKMGARGLRSILENILLDTMYDLPSLEGVNKVVIDESVVNGLSKPILIYEQDEKKSASGSKD</sequence>
<evidence type="ECO:0000255" key="1">
    <source>
        <dbReference type="HAMAP-Rule" id="MF_00175"/>
    </source>
</evidence>
<evidence type="ECO:0000255" key="2">
    <source>
        <dbReference type="PROSITE-ProRule" id="PRU01250"/>
    </source>
</evidence>
<evidence type="ECO:0000305" key="3"/>